<reference key="1">
    <citation type="journal article" date="1999" name="Mol. Phylogenet. Evol.">
        <title>The tribal radiation of the family Bovidae (Artiodactyla) and the evolution of the mitochondrial cytochrome b gene.</title>
        <authorList>
            <person name="Hassanin A."/>
            <person name="Douzery E.J.P."/>
        </authorList>
    </citation>
    <scope>NUCLEOTIDE SEQUENCE [GENOMIC DNA]</scope>
</reference>
<feature type="chain" id="PRO_0000061631" description="Cytochrome b">
    <location>
        <begin position="1"/>
        <end position="379"/>
    </location>
</feature>
<feature type="transmembrane region" description="Helical" evidence="2">
    <location>
        <begin position="33"/>
        <end position="53"/>
    </location>
</feature>
<feature type="transmembrane region" description="Helical" evidence="2">
    <location>
        <begin position="77"/>
        <end position="98"/>
    </location>
</feature>
<feature type="transmembrane region" description="Helical" evidence="2">
    <location>
        <begin position="113"/>
        <end position="133"/>
    </location>
</feature>
<feature type="transmembrane region" description="Helical" evidence="2">
    <location>
        <begin position="178"/>
        <end position="198"/>
    </location>
</feature>
<feature type="transmembrane region" description="Helical" evidence="2">
    <location>
        <begin position="226"/>
        <end position="246"/>
    </location>
</feature>
<feature type="transmembrane region" description="Helical" evidence="2">
    <location>
        <begin position="288"/>
        <end position="308"/>
    </location>
</feature>
<feature type="transmembrane region" description="Helical" evidence="2">
    <location>
        <begin position="320"/>
        <end position="340"/>
    </location>
</feature>
<feature type="transmembrane region" description="Helical" evidence="2">
    <location>
        <begin position="347"/>
        <end position="367"/>
    </location>
</feature>
<feature type="binding site" description="axial binding residue" evidence="2">
    <location>
        <position position="83"/>
    </location>
    <ligand>
        <name>heme b</name>
        <dbReference type="ChEBI" id="CHEBI:60344"/>
        <label>b562</label>
    </ligand>
    <ligandPart>
        <name>Fe</name>
        <dbReference type="ChEBI" id="CHEBI:18248"/>
    </ligandPart>
</feature>
<feature type="binding site" description="axial binding residue" evidence="2">
    <location>
        <position position="97"/>
    </location>
    <ligand>
        <name>heme b</name>
        <dbReference type="ChEBI" id="CHEBI:60344"/>
        <label>b566</label>
    </ligand>
    <ligandPart>
        <name>Fe</name>
        <dbReference type="ChEBI" id="CHEBI:18248"/>
    </ligandPart>
</feature>
<feature type="binding site" description="axial binding residue" evidence="2">
    <location>
        <position position="182"/>
    </location>
    <ligand>
        <name>heme b</name>
        <dbReference type="ChEBI" id="CHEBI:60344"/>
        <label>b562</label>
    </ligand>
    <ligandPart>
        <name>Fe</name>
        <dbReference type="ChEBI" id="CHEBI:18248"/>
    </ligandPart>
</feature>
<feature type="binding site" description="axial binding residue" evidence="2">
    <location>
        <position position="196"/>
    </location>
    <ligand>
        <name>heme b</name>
        <dbReference type="ChEBI" id="CHEBI:60344"/>
        <label>b566</label>
    </ligand>
    <ligandPart>
        <name>Fe</name>
        <dbReference type="ChEBI" id="CHEBI:18248"/>
    </ligandPart>
</feature>
<feature type="binding site" evidence="2">
    <location>
        <position position="201"/>
    </location>
    <ligand>
        <name>a ubiquinone</name>
        <dbReference type="ChEBI" id="CHEBI:16389"/>
    </ligand>
</feature>
<accession>Q9T9B9</accession>
<sequence>MTHIRKSHPLMKILNNAFIDLPAPSNISSWWNFGSLLGICLILQILTGLFLAMHYTSDTTTAFSSVAHICXDVNYGWIIRYMHANGASMFFICLYMHVGRGLYYGSYTFLETWNIGVILLFTVMATAFMGYVLPWGQMSFWGATVITNLLSAIPYIGTNLVEWIWGGFSVDKATLTRFFAFHFILPFIIAALAMIHLLFLHETGSNNPTGISSDTDKIPFHPYYTIKDILGALLLILALMLLVLFSPDLLGDPDNYTPANPLNTPPHIKPEWYFLFAYAILRSIPNKLGGVLALILSILILIIMPLLHTSKQRSMMFRPLSQCLFWILVADLLTLTWIGGQPVEHPYIIIGQLASIMYFLLILVLMPTASTIENNLLKW</sequence>
<gene>
    <name type="primary">MT-CYB</name>
    <name type="synonym">COB</name>
    <name type="synonym">CYTB</name>
    <name type="synonym">MTCYB</name>
</gene>
<name>CYB_SYNCA</name>
<geneLocation type="mitochondrion"/>
<dbReference type="EMBL" id="AF036275">
    <property type="protein sequence ID" value="AAD51426.1"/>
    <property type="molecule type" value="Genomic_DNA"/>
</dbReference>
<dbReference type="GO" id="GO:0005743">
    <property type="term" value="C:mitochondrial inner membrane"/>
    <property type="evidence" value="ECO:0007669"/>
    <property type="project" value="UniProtKB-SubCell"/>
</dbReference>
<dbReference type="GO" id="GO:0045275">
    <property type="term" value="C:respiratory chain complex III"/>
    <property type="evidence" value="ECO:0007669"/>
    <property type="project" value="InterPro"/>
</dbReference>
<dbReference type="GO" id="GO:0046872">
    <property type="term" value="F:metal ion binding"/>
    <property type="evidence" value="ECO:0007669"/>
    <property type="project" value="UniProtKB-KW"/>
</dbReference>
<dbReference type="GO" id="GO:0008121">
    <property type="term" value="F:ubiquinol-cytochrome-c reductase activity"/>
    <property type="evidence" value="ECO:0007669"/>
    <property type="project" value="InterPro"/>
</dbReference>
<dbReference type="GO" id="GO:0006122">
    <property type="term" value="P:mitochondrial electron transport, ubiquinol to cytochrome c"/>
    <property type="evidence" value="ECO:0007669"/>
    <property type="project" value="TreeGrafter"/>
</dbReference>
<dbReference type="CDD" id="cd00290">
    <property type="entry name" value="cytochrome_b_C"/>
    <property type="match status" value="1"/>
</dbReference>
<dbReference type="CDD" id="cd00284">
    <property type="entry name" value="Cytochrome_b_N"/>
    <property type="match status" value="1"/>
</dbReference>
<dbReference type="FunFam" id="1.20.810.10:FF:000002">
    <property type="entry name" value="Cytochrome b"/>
    <property type="match status" value="1"/>
</dbReference>
<dbReference type="Gene3D" id="1.20.810.10">
    <property type="entry name" value="Cytochrome Bc1 Complex, Chain C"/>
    <property type="match status" value="1"/>
</dbReference>
<dbReference type="InterPro" id="IPR005798">
    <property type="entry name" value="Cyt_b/b6_C"/>
</dbReference>
<dbReference type="InterPro" id="IPR036150">
    <property type="entry name" value="Cyt_b/b6_C_sf"/>
</dbReference>
<dbReference type="InterPro" id="IPR005797">
    <property type="entry name" value="Cyt_b/b6_N"/>
</dbReference>
<dbReference type="InterPro" id="IPR027387">
    <property type="entry name" value="Cytb/b6-like_sf"/>
</dbReference>
<dbReference type="InterPro" id="IPR030689">
    <property type="entry name" value="Cytochrome_b"/>
</dbReference>
<dbReference type="InterPro" id="IPR048260">
    <property type="entry name" value="Cytochrome_b_C_euk/bac"/>
</dbReference>
<dbReference type="InterPro" id="IPR048259">
    <property type="entry name" value="Cytochrome_b_N_euk/bac"/>
</dbReference>
<dbReference type="InterPro" id="IPR016174">
    <property type="entry name" value="Di-haem_cyt_TM"/>
</dbReference>
<dbReference type="PANTHER" id="PTHR19271">
    <property type="entry name" value="CYTOCHROME B"/>
    <property type="match status" value="1"/>
</dbReference>
<dbReference type="PANTHER" id="PTHR19271:SF16">
    <property type="entry name" value="CYTOCHROME B"/>
    <property type="match status" value="1"/>
</dbReference>
<dbReference type="Pfam" id="PF00032">
    <property type="entry name" value="Cytochrom_B_C"/>
    <property type="match status" value="1"/>
</dbReference>
<dbReference type="Pfam" id="PF00033">
    <property type="entry name" value="Cytochrome_B"/>
    <property type="match status" value="1"/>
</dbReference>
<dbReference type="PIRSF" id="PIRSF038885">
    <property type="entry name" value="COB"/>
    <property type="match status" value="1"/>
</dbReference>
<dbReference type="SUPFAM" id="SSF81648">
    <property type="entry name" value="a domain/subunit of cytochrome bc1 complex (Ubiquinol-cytochrome c reductase)"/>
    <property type="match status" value="1"/>
</dbReference>
<dbReference type="SUPFAM" id="SSF81342">
    <property type="entry name" value="Transmembrane di-heme cytochromes"/>
    <property type="match status" value="1"/>
</dbReference>
<dbReference type="PROSITE" id="PS51003">
    <property type="entry name" value="CYTB_CTER"/>
    <property type="match status" value="1"/>
</dbReference>
<dbReference type="PROSITE" id="PS51002">
    <property type="entry name" value="CYTB_NTER"/>
    <property type="match status" value="1"/>
</dbReference>
<protein>
    <recommendedName>
        <fullName>Cytochrome b</fullName>
    </recommendedName>
    <alternativeName>
        <fullName>Complex III subunit 3</fullName>
    </alternativeName>
    <alternativeName>
        <fullName>Complex III subunit III</fullName>
    </alternativeName>
    <alternativeName>
        <fullName>Cytochrome b-c1 complex subunit 3</fullName>
    </alternativeName>
    <alternativeName>
        <fullName>Ubiquinol-cytochrome-c reductase complex cytochrome b subunit</fullName>
    </alternativeName>
</protein>
<organism>
    <name type="scientific">Syncerus caffer</name>
    <name type="common">African buffalo</name>
    <dbReference type="NCBI Taxonomy" id="9970"/>
    <lineage>
        <taxon>Eukaryota</taxon>
        <taxon>Metazoa</taxon>
        <taxon>Chordata</taxon>
        <taxon>Craniata</taxon>
        <taxon>Vertebrata</taxon>
        <taxon>Euteleostomi</taxon>
        <taxon>Mammalia</taxon>
        <taxon>Eutheria</taxon>
        <taxon>Laurasiatheria</taxon>
        <taxon>Artiodactyla</taxon>
        <taxon>Ruminantia</taxon>
        <taxon>Pecora</taxon>
        <taxon>Bovidae</taxon>
        <taxon>Bovinae</taxon>
        <taxon>Syncerus</taxon>
    </lineage>
</organism>
<proteinExistence type="inferred from homology"/>
<evidence type="ECO:0000250" key="1"/>
<evidence type="ECO:0000250" key="2">
    <source>
        <dbReference type="UniProtKB" id="P00157"/>
    </source>
</evidence>
<evidence type="ECO:0000255" key="3">
    <source>
        <dbReference type="PROSITE-ProRule" id="PRU00967"/>
    </source>
</evidence>
<evidence type="ECO:0000255" key="4">
    <source>
        <dbReference type="PROSITE-ProRule" id="PRU00968"/>
    </source>
</evidence>
<comment type="function">
    <text evidence="2">Component of the ubiquinol-cytochrome c reductase complex (complex III or cytochrome b-c1 complex) that is part of the mitochondrial respiratory chain. The b-c1 complex mediates electron transfer from ubiquinol to cytochrome c. Contributes to the generation of a proton gradient across the mitochondrial membrane that is then used for ATP synthesis.</text>
</comment>
<comment type="cofactor">
    <cofactor evidence="2">
        <name>heme b</name>
        <dbReference type="ChEBI" id="CHEBI:60344"/>
    </cofactor>
    <text evidence="2">Binds 2 heme b groups non-covalently.</text>
</comment>
<comment type="subunit">
    <text evidence="2">The cytochrome bc1 complex contains 11 subunits: 3 respiratory subunits (MT-CYB, CYC1 and UQCRFS1), 2 core proteins (UQCRC1 and UQCRC2) and 6 low-molecular weight proteins (UQCRH/QCR6, UQCRB/QCR7, UQCRQ/QCR8, UQCR10/QCR9, UQCR11/QCR10 and a cleavage product of UQCRFS1). This cytochrome bc1 complex then forms a dimer.</text>
</comment>
<comment type="subcellular location">
    <subcellularLocation>
        <location evidence="2">Mitochondrion inner membrane</location>
        <topology evidence="2">Multi-pass membrane protein</topology>
    </subcellularLocation>
</comment>
<comment type="miscellaneous">
    <text evidence="1">Heme 1 (or BL or b562) is low-potential and absorbs at about 562 nm, and heme 2 (or BH or b566) is high-potential and absorbs at about 566 nm.</text>
</comment>
<comment type="similarity">
    <text evidence="3 4">Belongs to the cytochrome b family.</text>
</comment>
<comment type="caution">
    <text evidence="2">The full-length protein contains only eight transmembrane helices, not nine as predicted by bioinformatics tools.</text>
</comment>
<keyword id="KW-0249">Electron transport</keyword>
<keyword id="KW-0349">Heme</keyword>
<keyword id="KW-0408">Iron</keyword>
<keyword id="KW-0472">Membrane</keyword>
<keyword id="KW-0479">Metal-binding</keyword>
<keyword id="KW-0496">Mitochondrion</keyword>
<keyword id="KW-0999">Mitochondrion inner membrane</keyword>
<keyword id="KW-0679">Respiratory chain</keyword>
<keyword id="KW-0812">Transmembrane</keyword>
<keyword id="KW-1133">Transmembrane helix</keyword>
<keyword id="KW-0813">Transport</keyword>
<keyword id="KW-0830">Ubiquinone</keyword>